<protein>
    <recommendedName>
        <fullName evidence="1">Major capsid protein L1</fullName>
    </recommendedName>
</protein>
<dbReference type="EMBL" id="U31786">
    <property type="protein sequence ID" value="AAA79449.1"/>
    <property type="molecule type" value="Genomic_DNA"/>
</dbReference>
<dbReference type="EMBL" id="U21874">
    <property type="protein sequence ID" value="AAA92835.1"/>
    <property type="molecule type" value="Genomic_DNA"/>
</dbReference>
<dbReference type="SMR" id="P50813"/>
<dbReference type="Proteomes" id="UP000009119">
    <property type="component" value="Genome"/>
</dbReference>
<dbReference type="GO" id="GO:0042025">
    <property type="term" value="C:host cell nucleus"/>
    <property type="evidence" value="ECO:0007669"/>
    <property type="project" value="UniProtKB-SubCell"/>
</dbReference>
<dbReference type="GO" id="GO:0039620">
    <property type="term" value="C:T=7 icosahedral viral capsid"/>
    <property type="evidence" value="ECO:0007669"/>
    <property type="project" value="UniProtKB-UniRule"/>
</dbReference>
<dbReference type="GO" id="GO:0005198">
    <property type="term" value="F:structural molecule activity"/>
    <property type="evidence" value="ECO:0007669"/>
    <property type="project" value="UniProtKB-UniRule"/>
</dbReference>
<dbReference type="GO" id="GO:0075509">
    <property type="term" value="P:endocytosis involved in viral entry into host cell"/>
    <property type="evidence" value="ECO:0007669"/>
    <property type="project" value="UniProtKB-KW"/>
</dbReference>
<dbReference type="GO" id="GO:0019062">
    <property type="term" value="P:virion attachment to host cell"/>
    <property type="evidence" value="ECO:0007669"/>
    <property type="project" value="UniProtKB-UniRule"/>
</dbReference>
<dbReference type="Gene3D" id="2.60.175.20">
    <property type="entry name" value="Major capsid L1 (late) superfamily, Papillomavirus"/>
    <property type="match status" value="2"/>
</dbReference>
<dbReference type="HAMAP" id="MF_04002">
    <property type="entry name" value="PPV_L1"/>
    <property type="match status" value="1"/>
</dbReference>
<dbReference type="InterPro" id="IPR002210">
    <property type="entry name" value="Capsid_L1_Papillomavir"/>
</dbReference>
<dbReference type="InterPro" id="IPR036973">
    <property type="entry name" value="Capsid_L1_sf_Papillomavir"/>
</dbReference>
<dbReference type="InterPro" id="IPR011222">
    <property type="entry name" value="dsDNA_vir_gr_I_capsid"/>
</dbReference>
<dbReference type="Pfam" id="PF00500">
    <property type="entry name" value="Late_protein_L1"/>
    <property type="match status" value="1"/>
</dbReference>
<dbReference type="PRINTS" id="PR00865">
    <property type="entry name" value="HPVCAPSIDL1"/>
</dbReference>
<dbReference type="SUPFAM" id="SSF88648">
    <property type="entry name" value="Group I dsDNA viruses"/>
    <property type="match status" value="1"/>
</dbReference>
<name>VL1_HPV37</name>
<sequence length="507" mass="57443">MTLWLPATGKVYLPPTPPVARVQSTDDYVERTNVFYHAMSDRLLTVGHPYYDVRSSDGLKIEVPKVSGNQYRAFRVRLPDPNKFALADMSVYNPEKERLVWACAGLEIGRGQPLGVGTTGHPLFNKLRDTENNSNYQGGSRDDRQNTSFDPKQVQMFVVGCVPCMGEHWDKAPVCASEENNQTGQCPPLELKNTVIEDGDMFDIGFGNINNKVLSTNKSDVSLDIVNEICKYPDFLTMANDVYGDACFFFARREQCYARHYFVRGGNVGDAIPDGTVNQDHKYYLPAKSDQQQYLLGNSTYFPTVSGSLVTSDAQLFNRPFWLRRAQGHNNGILWGNQMFITVADNTRNTNFSISVSTDNGEVTEYNSQTLREYLRHVEEYQLSIILQLCKVPLKAEVLTQINAMNSGILEEWQLGFVPTPDNSVHDLYRYINSKATKCPDAVVEKEKEDPFAKYTFWNVDLTEKLSLDLDQYPLGRKFIFQSGLQSRPRIVRSSVKVSKGTKRKRS</sequence>
<keyword id="KW-0167">Capsid protein</keyword>
<keyword id="KW-1015">Disulfide bond</keyword>
<keyword id="KW-1048">Host nucleus</keyword>
<keyword id="KW-0945">Host-virus interaction</keyword>
<keyword id="KW-0426">Late protein</keyword>
<keyword id="KW-1145">T=7 icosahedral capsid protein</keyword>
<keyword id="KW-1161">Viral attachment to host cell</keyword>
<keyword id="KW-1162">Viral penetration into host cytoplasm</keyword>
<keyword id="KW-0946">Virion</keyword>
<keyword id="KW-1164">Virus endocytosis by host</keyword>
<keyword id="KW-1160">Virus entry into host cell</keyword>
<proteinExistence type="inferred from homology"/>
<feature type="chain" id="PRO_0000133521" description="Major capsid protein L1">
    <location>
        <begin position="1"/>
        <end position="507"/>
    </location>
</feature>
<feature type="disulfide bond" description="Interchain (with C-439)" evidence="1">
    <location>
        <position position="175"/>
    </location>
</feature>
<feature type="disulfide bond" description="Interchain (with C-175)" evidence="1">
    <location>
        <position position="439"/>
    </location>
</feature>
<accession>P50813</accession>
<accession>Q80906</accession>
<reference key="1">
    <citation type="submission" date="1995-10" db="EMBL/GenBank/DDBJ databases">
        <authorList>
            <person name="Delius H."/>
        </authorList>
    </citation>
    <scope>NUCLEOTIDE SEQUENCE [GENOMIC DNA]</scope>
</reference>
<reference key="2">
    <citation type="journal article" date="1995" name="J. Virol.">
        <title>Analysis of genomic sequences of 95 papillomavirus types: uniting typing, phylogeny, and taxonomy.</title>
        <authorList>
            <person name="Chan S.-Y."/>
            <person name="Delius H."/>
            <person name="Halpern A.L."/>
            <person name="Bernard H.U."/>
        </authorList>
    </citation>
    <scope>NUCLEOTIDE SEQUENCE [GENOMIC DNA] OF 374-469</scope>
</reference>
<organism>
    <name type="scientific">Human papillomavirus 37</name>
    <dbReference type="NCBI Taxonomy" id="37958"/>
    <lineage>
        <taxon>Viruses</taxon>
        <taxon>Monodnaviria</taxon>
        <taxon>Shotokuvirae</taxon>
        <taxon>Cossaviricota</taxon>
        <taxon>Papovaviricetes</taxon>
        <taxon>Zurhausenvirales</taxon>
        <taxon>Papillomaviridae</taxon>
        <taxon>Firstpapillomavirinae</taxon>
        <taxon>Betapapillomavirus</taxon>
        <taxon>Betapapillomavirus 2</taxon>
    </lineage>
</organism>
<gene>
    <name evidence="1" type="primary">L1</name>
</gene>
<evidence type="ECO:0000255" key="1">
    <source>
        <dbReference type="HAMAP-Rule" id="MF_04002"/>
    </source>
</evidence>
<organismHost>
    <name type="scientific">Homo sapiens</name>
    <name type="common">Human</name>
    <dbReference type="NCBI Taxonomy" id="9606"/>
</organismHost>
<comment type="function">
    <text evidence="1">Forms an icosahedral capsid with a T=7 symmetry and a 50 nm diameter. The capsid is composed of 72 pentamers linked to each other by disulfide bonds and associated with L2 proteins. Binds to heparan sulfate proteoglycans on cell surface of basal layer keratinocytes to provide initial virion attachment. This binding mediates a conformational change in the virus capsid that facilitates efficient infection. The virion enters the host cell via endocytosis. During virus trafficking, L1 protein dissociates from the viral DNA and the genomic DNA is released to the host nucleus. The virion assembly takes place within the cell nucleus. Encapsulates the genomic DNA together with protein L2.</text>
</comment>
<comment type="subunit">
    <text evidence="1">Self-assembles into homopentamers. The capsid has an icosahedral symmetry and consists of 72 capsomers, with each capsomer being a pentamer of L1. Interacts with the minor capsid protein L2; this interaction is necessary for viral genome encapsidation. Interacts with protein E2; this interaction enhances E2-dependent replication and transcription activation.</text>
</comment>
<comment type="subcellular location">
    <subcellularLocation>
        <location evidence="1">Virion</location>
    </subcellularLocation>
    <subcellularLocation>
        <location evidence="1">Host nucleus</location>
    </subcellularLocation>
</comment>
<comment type="similarity">
    <text evidence="1">Belongs to the papillomaviridae L1 protein family.</text>
</comment>